<protein>
    <recommendedName>
        <fullName evidence="7">Large ribosomal subunit protein uL13</fullName>
    </recommendedName>
    <alternativeName>
        <fullName>60S ribosomal protein L13a</fullName>
    </alternativeName>
    <alternativeName>
        <fullName>Transplantation antigen P198</fullName>
    </alternativeName>
    <alternativeName>
        <fullName>Tum-P198 antigen</fullName>
    </alternativeName>
</protein>
<accession>P19253</accession>
<sequence length="203" mass="23464">MAEGQVLVLDGRGHLLGRLAAIVAKQVLLGRKVVVVRCEGINISGNFYRNKLKYLAFLRKRMNTNPSRGPYHFRAPSRIFWRTVRGMLPHKTKRGQAALERLKVLDGIPPPYDKKKRMVVPAALKVVRLKPTRKFAYLGRLAHEVGWKYQAVTATLEEKRKEKAKMHYRKKKQILRLRKQAEKNVEKKICKFTEVLKTNGLLV</sequence>
<reference key="1">
    <citation type="journal article" date="1990" name="J. Exp. Med.">
        <title>Structure of the gene of tum- transplantation antigen P198: a point mutation generates a new antigenic peptide.</title>
        <authorList>
            <person name="Sibille C."/>
            <person name="Chomez P."/>
            <person name="Wildmann C."/>
            <person name="van Pel A."/>
            <person name="de Plaen E."/>
            <person name="Maryanski J.L."/>
            <person name="de Bergeyck V."/>
            <person name="Boon T."/>
        </authorList>
    </citation>
    <scope>NUCLEOTIDE SEQUENCE [GENOMIC DNA]</scope>
</reference>
<reference key="2">
    <citation type="journal article" date="2004" name="Genome Res.">
        <title>The status, quality, and expansion of the NIH full-length cDNA project: the Mammalian Gene Collection (MGC).</title>
        <authorList>
            <consortium name="The MGC Project Team"/>
        </authorList>
    </citation>
    <scope>NUCLEOTIDE SEQUENCE [LARGE SCALE MRNA]</scope>
    <source>
        <strain>FVB/N-3</strain>
        <tissue>Mammary gland</tissue>
    </source>
</reference>
<reference key="3">
    <citation type="submission" date="2005-10" db="UniProtKB">
        <authorList>
            <person name="Kanor S."/>
            <person name="Bienvenut W.V."/>
        </authorList>
    </citation>
    <scope>PROTEIN SEQUENCE OF 2-12; 54-59; 104-114; 135-140; 149-159 AND 192-197</scope>
    <scope>CLEAVAGE OF INITIATOR METHIONINE</scope>
    <scope>ACETYLATION AT ALA-2</scope>
    <scope>IDENTIFICATION BY MASS SPECTROMETRY</scope>
    <source>
        <strain>C57BL/6J</strain>
        <tissue>Liver</tissue>
    </source>
</reference>
<reference key="4">
    <citation type="journal article" date="1994" name="Genomics">
        <title>Protein family classification based on searching a database of blocks.</title>
        <authorList>
            <person name="Henikoff S."/>
            <person name="Henikoff J.G."/>
        </authorList>
    </citation>
    <scope>SIMILARITY TO L13P</scope>
</reference>
<reference key="5">
    <citation type="journal article" date="2012" name="Mol. Cell. Biol.">
        <title>Heterotrimeric GAIT complex drives transcript-selective translation inhibition in murine macrophages.</title>
        <authorList>
            <person name="Arif A."/>
            <person name="Chatterjee P."/>
            <person name="Moodt R.A."/>
            <person name="Fox P.L."/>
        </authorList>
    </citation>
    <scope>FUNCTION</scope>
    <scope>PHOSPHORYLATION AT SER-77</scope>
    <scope>SUBUNIT</scope>
    <scope>RECONSTITUTION OF THE GAIT COMPLEX</scope>
    <scope>MUTAGENESIS OF SER-77</scope>
</reference>
<reference key="6">
    <citation type="journal article" date="2014" name="Nature">
        <title>Citrullination regulates pluripotency and histone H1 binding to chromatin.</title>
        <authorList>
            <person name="Christophorou M.A."/>
            <person name="Castelo-Branco G."/>
            <person name="Halley-Stott R.P."/>
            <person name="Oliveira C.S."/>
            <person name="Loos R."/>
            <person name="Radzisheuskaya A."/>
            <person name="Mowen K.A."/>
            <person name="Bertone P."/>
            <person name="Silva J.C."/>
            <person name="Zernicka-Goetz M."/>
            <person name="Nielsen M.L."/>
            <person name="Gurdon J.B."/>
            <person name="Kouzarides T."/>
        </authorList>
    </citation>
    <scope>CITRULLINATION AT ARG-59 AND ARG-140</scope>
</reference>
<reference evidence="8 9" key="7">
    <citation type="journal article" date="2022" name="Nature">
        <title>A male germ-cell-specific ribosome controls male fertility.</title>
        <authorList>
            <person name="Li H."/>
            <person name="Huo Y."/>
            <person name="He X."/>
            <person name="Yao L."/>
            <person name="Zhang H."/>
            <person name="Cui Y."/>
            <person name="Xiao H."/>
            <person name="Xie W."/>
            <person name="Zhang D."/>
            <person name="Wang Y."/>
            <person name="Zhang S."/>
            <person name="Tu H."/>
            <person name="Cheng Y."/>
            <person name="Guo Y."/>
            <person name="Cao X."/>
            <person name="Zhu Y."/>
            <person name="Jiang T."/>
            <person name="Guo X."/>
            <person name="Qin Y."/>
            <person name="Sha J."/>
        </authorList>
    </citation>
    <scope>STRUCTURE BY ELECTRON MICROSCOPY (3.03 ANGSTROMS) OF RIBOSOME</scope>
    <scope>FUNCTION</scope>
    <scope>SUBUNIT</scope>
    <scope>SUBCELLULAR LOCATION</scope>
</reference>
<gene>
    <name type="primary">Rpl13a</name>
    <name type="synonym">P198</name>
    <name type="synonym">Tstap198-7</name>
</gene>
<proteinExistence type="evidence at protein level"/>
<keyword id="KW-0002">3D-structure</keyword>
<keyword id="KW-0007">Acetylation</keyword>
<keyword id="KW-0164">Citrullination</keyword>
<keyword id="KW-0963">Cytoplasm</keyword>
<keyword id="KW-0903">Direct protein sequencing</keyword>
<keyword id="KW-0597">Phosphoprotein</keyword>
<keyword id="KW-1185">Reference proteome</keyword>
<keyword id="KW-0687">Ribonucleoprotein</keyword>
<keyword id="KW-0689">Ribosomal protein</keyword>
<keyword id="KW-0810">Translation regulation</keyword>
<keyword id="KW-0825">Tumor antigen</keyword>
<comment type="function">
    <text evidence="1 3 5">Associated with ribosomes but is not required for canonical ribosome function and has extra-ribosomal functions (PubMed:36517592). Component of the GAIT (gamma interferon-activated inhibitor of translation) complex which mediates interferon-gamma-induced transcript-selective translation inhibition in inflammation processes (PubMed:23071094). Upon interferon-gamma activation and subsequent phosphorylation dissociates from the ribosome and assembles into the GAIT complex which binds to stem loop-containing GAIT elements in the 3'-UTR of diverse inflammatory mRNAs (such as ceruplasmin) and suppresses their translation (By similarity). In the GAIT complex interacts with m7G cap-bound eIF4G at or near the eIF3-binding site and blocks the recruitment of the 43S ribosomal complex (By similarity). Involved in methylation of rRNA (By similarity).</text>
</comment>
<comment type="subunit">
    <text evidence="1 5">Component of the 60S ribosome (PubMed:36517592). Component of the GAIT complex (By similarity). Interacts with EIF4G1 (By similarity).</text>
</comment>
<comment type="subcellular location">
    <subcellularLocation>
        <location evidence="5">Cytoplasm</location>
    </subcellularLocation>
</comment>
<comment type="PTM">
    <text evidence="3">Phosphorylation at Ser-77 upon interferon-gamma treatment in macrophages involves a DAPK1-DAPK3 kinase cascade and is causing release from the ribosome, association with the GAIT complex and subsequent involvement in transcript-selective translation inhibition.</text>
</comment>
<comment type="PTM">
    <text evidence="4">Citrullinated by PADI4.</text>
</comment>
<comment type="polymorphism">
    <text evidence="2">The antigenic allele of P198 differs from the normal allele by a single mutation. The TUM- mutation P198 generates a new epitope recognized by syngeneic T-cells.</text>
</comment>
<comment type="similarity">
    <text evidence="7">Belongs to the universal ribosomal protein uL13 family.</text>
</comment>
<feature type="initiator methionine" description="Removed" evidence="6">
    <location>
        <position position="1"/>
    </location>
</feature>
<feature type="chain" id="PRO_0000133770" description="Large ribosomal subunit protein uL13">
    <location>
        <begin position="2"/>
        <end position="203"/>
    </location>
</feature>
<feature type="modified residue" description="N-acetylalanine" evidence="6">
    <location>
        <position position="2"/>
    </location>
</feature>
<feature type="modified residue" description="Citrulline" evidence="4">
    <location>
        <position position="59"/>
    </location>
</feature>
<feature type="modified residue" description="Phosphoserine; by ZIPK/DAPK3" evidence="3">
    <location>
        <position position="77"/>
    </location>
</feature>
<feature type="modified residue" description="Citrulline" evidence="4">
    <location>
        <position position="140"/>
    </location>
</feature>
<feature type="modified residue" description="N6-acetyllysine" evidence="1">
    <location>
        <position position="191"/>
    </location>
</feature>
<feature type="sequence variant" description="In allele TUM-.">
    <original>A</original>
    <variation>T</variation>
    <location>
        <position position="154"/>
    </location>
</feature>
<feature type="mutagenesis site" description="Loss of interferon-gamma induced phosphorylation." evidence="3">
    <original>S</original>
    <variation>A</variation>
    <location>
        <position position="77"/>
    </location>
</feature>
<name>RL13A_MOUSE</name>
<evidence type="ECO:0000250" key="1">
    <source>
        <dbReference type="UniProtKB" id="P40429"/>
    </source>
</evidence>
<evidence type="ECO:0000269" key="2">
    <source>
    </source>
</evidence>
<evidence type="ECO:0000269" key="3">
    <source>
    </source>
</evidence>
<evidence type="ECO:0000269" key="4">
    <source>
    </source>
</evidence>
<evidence type="ECO:0000269" key="5">
    <source>
    </source>
</evidence>
<evidence type="ECO:0000269" key="6">
    <source ref="3"/>
</evidence>
<evidence type="ECO:0000305" key="7"/>
<evidence type="ECO:0007744" key="8">
    <source>
        <dbReference type="PDB" id="7CPU"/>
    </source>
</evidence>
<evidence type="ECO:0007744" key="9">
    <source>
        <dbReference type="PDB" id="7CPV"/>
    </source>
</evidence>
<dbReference type="EMBL" id="X51528">
    <property type="protein sequence ID" value="CAA35908.1"/>
    <property type="molecule type" value="Genomic_DNA"/>
</dbReference>
<dbReference type="EMBL" id="BC082289">
    <property type="protein sequence ID" value="AAH82289.1"/>
    <property type="molecule type" value="mRNA"/>
</dbReference>
<dbReference type="CCDS" id="CCDS21230.1"/>
<dbReference type="PIR" id="JL0149">
    <property type="entry name" value="JL0149"/>
</dbReference>
<dbReference type="RefSeq" id="NP_033464.2">
    <property type="nucleotide sequence ID" value="NM_009438.5"/>
</dbReference>
<dbReference type="PDB" id="6SWA">
    <property type="method" value="EM"/>
    <property type="resolution" value="3.10 A"/>
    <property type="chains" value="N=1-203"/>
</dbReference>
<dbReference type="PDB" id="7CPU">
    <property type="method" value="EM"/>
    <property type="resolution" value="2.82 A"/>
    <property type="chains" value="LO=1-203"/>
</dbReference>
<dbReference type="PDB" id="7CPV">
    <property type="method" value="EM"/>
    <property type="resolution" value="3.03 A"/>
    <property type="chains" value="LO=1-203"/>
</dbReference>
<dbReference type="PDB" id="7LS1">
    <property type="method" value="EM"/>
    <property type="resolution" value="3.30 A"/>
    <property type="chains" value="I2=1-203"/>
</dbReference>
<dbReference type="PDB" id="7LS2">
    <property type="method" value="EM"/>
    <property type="resolution" value="3.10 A"/>
    <property type="chains" value="I2=1-203"/>
</dbReference>
<dbReference type="PDBsum" id="6SWA"/>
<dbReference type="PDBsum" id="7CPU"/>
<dbReference type="PDBsum" id="7CPV"/>
<dbReference type="PDBsum" id="7LS1"/>
<dbReference type="PDBsum" id="7LS2"/>
<dbReference type="EMDB" id="EMD-10321"/>
<dbReference type="EMDB" id="EMD-23500"/>
<dbReference type="EMDB" id="EMD-23501"/>
<dbReference type="EMDB" id="EMD-30432"/>
<dbReference type="EMDB" id="EMD-30433"/>
<dbReference type="SMR" id="P19253"/>
<dbReference type="BioGRID" id="204356">
    <property type="interactions" value="111"/>
</dbReference>
<dbReference type="ComplexPortal" id="CPX-5262">
    <property type="entry name" value="60S cytosolic large ribosomal subunit"/>
</dbReference>
<dbReference type="ComplexPortal" id="CPX-7662">
    <property type="entry name" value="60S cytosolic large ribosomal subunit, testis-specific variant"/>
</dbReference>
<dbReference type="ComplexPortal" id="CPX-7663">
    <property type="entry name" value="60S cytosolic large ribosomal subunit, striated muscle variant"/>
</dbReference>
<dbReference type="CORUM" id="P19253"/>
<dbReference type="FunCoup" id="P19253">
    <property type="interactions" value="1698"/>
</dbReference>
<dbReference type="IntAct" id="P19253">
    <property type="interactions" value="6"/>
</dbReference>
<dbReference type="MINT" id="P19253"/>
<dbReference type="STRING" id="10090.ENSMUSP00000115722"/>
<dbReference type="GlyGen" id="P19253">
    <property type="glycosylation" value="2 sites, 1 O-linked glycan (1 site)"/>
</dbReference>
<dbReference type="iPTMnet" id="P19253"/>
<dbReference type="MetOSite" id="P19253"/>
<dbReference type="PhosphoSitePlus" id="P19253"/>
<dbReference type="SwissPalm" id="P19253"/>
<dbReference type="jPOST" id="P19253"/>
<dbReference type="PaxDb" id="10090-ENSMUSP00000115722"/>
<dbReference type="PeptideAtlas" id="P19253"/>
<dbReference type="ProteomicsDB" id="253297"/>
<dbReference type="Pumba" id="P19253"/>
<dbReference type="DNASU" id="22121"/>
<dbReference type="Ensembl" id="ENSMUST00000150350.9">
    <property type="protein sequence ID" value="ENSMUSP00000115722.2"/>
    <property type="gene ID" value="ENSMUSG00000074129.15"/>
</dbReference>
<dbReference type="GeneID" id="22121"/>
<dbReference type="KEGG" id="mmu:22121"/>
<dbReference type="UCSC" id="uc009gtj.2">
    <property type="organism name" value="mouse"/>
</dbReference>
<dbReference type="AGR" id="MGI:1351455"/>
<dbReference type="CTD" id="23521"/>
<dbReference type="MGI" id="MGI:1351455">
    <property type="gene designation" value="Rpl13a"/>
</dbReference>
<dbReference type="VEuPathDB" id="HostDB:ENSMUSG00000074129"/>
<dbReference type="eggNOG" id="KOG3204">
    <property type="taxonomic scope" value="Eukaryota"/>
</dbReference>
<dbReference type="GeneTree" id="ENSGT00390000010799"/>
<dbReference type="HOGENOM" id="CLU_076922_0_0_1"/>
<dbReference type="InParanoid" id="P19253"/>
<dbReference type="OMA" id="GMLPWKT"/>
<dbReference type="OrthoDB" id="1882297at2759"/>
<dbReference type="TreeFam" id="TF300159"/>
<dbReference type="Reactome" id="R-MMU-156827">
    <property type="pathway name" value="L13a-mediated translational silencing of Ceruloplasmin expression"/>
</dbReference>
<dbReference type="Reactome" id="R-MMU-1799339">
    <property type="pathway name" value="SRP-dependent cotranslational protein targeting to membrane"/>
</dbReference>
<dbReference type="Reactome" id="R-MMU-6791226">
    <property type="pathway name" value="Major pathway of rRNA processing in the nucleolus and cytosol"/>
</dbReference>
<dbReference type="Reactome" id="R-MMU-72689">
    <property type="pathway name" value="Formation of a pool of free 40S subunits"/>
</dbReference>
<dbReference type="Reactome" id="R-MMU-72706">
    <property type="pathway name" value="GTP hydrolysis and joining of the 60S ribosomal subunit"/>
</dbReference>
<dbReference type="Reactome" id="R-MMU-975956">
    <property type="pathway name" value="Nonsense Mediated Decay (NMD) independent of the Exon Junction Complex (EJC)"/>
</dbReference>
<dbReference type="Reactome" id="R-MMU-975957">
    <property type="pathway name" value="Nonsense Mediated Decay (NMD) enhanced by the Exon Junction Complex (EJC)"/>
</dbReference>
<dbReference type="BioGRID-ORCS" id="22121">
    <property type="hits" value="41 hits in 98 CRISPR screens"/>
</dbReference>
<dbReference type="ChiTaRS" id="Rpl13a">
    <property type="organism name" value="mouse"/>
</dbReference>
<dbReference type="PRO" id="PR:P19253"/>
<dbReference type="Proteomes" id="UP000000589">
    <property type="component" value="Chromosome 7"/>
</dbReference>
<dbReference type="RNAct" id="P19253">
    <property type="molecule type" value="protein"/>
</dbReference>
<dbReference type="Bgee" id="ENSMUSG00000074129">
    <property type="expression patterns" value="Expressed in embryonic brain and 66 other cell types or tissues"/>
</dbReference>
<dbReference type="ExpressionAtlas" id="P19253">
    <property type="expression patterns" value="baseline and differential"/>
</dbReference>
<dbReference type="GO" id="GO:0005737">
    <property type="term" value="C:cytoplasm"/>
    <property type="evidence" value="ECO:0000314"/>
    <property type="project" value="ComplexPortal"/>
</dbReference>
<dbReference type="GO" id="GO:0005829">
    <property type="term" value="C:cytosol"/>
    <property type="evidence" value="ECO:0000304"/>
    <property type="project" value="Reactome"/>
</dbReference>
<dbReference type="GO" id="GO:0022625">
    <property type="term" value="C:cytosolic large ribosomal subunit"/>
    <property type="evidence" value="ECO:0000314"/>
    <property type="project" value="UniProtKB"/>
</dbReference>
<dbReference type="GO" id="GO:0097452">
    <property type="term" value="C:GAIT complex"/>
    <property type="evidence" value="ECO:0000314"/>
    <property type="project" value="UniProtKB"/>
</dbReference>
<dbReference type="GO" id="GO:0098794">
    <property type="term" value="C:postsynapse"/>
    <property type="evidence" value="ECO:0000303"/>
    <property type="project" value="SynGO"/>
</dbReference>
<dbReference type="GO" id="GO:0098793">
    <property type="term" value="C:presynapse"/>
    <property type="evidence" value="ECO:0000303"/>
    <property type="project" value="SynGO"/>
</dbReference>
<dbReference type="GO" id="GO:1990904">
    <property type="term" value="C:ribonucleoprotein complex"/>
    <property type="evidence" value="ECO:0000314"/>
    <property type="project" value="MGI"/>
</dbReference>
<dbReference type="GO" id="GO:0005840">
    <property type="term" value="C:ribosome"/>
    <property type="evidence" value="ECO:0000303"/>
    <property type="project" value="SynGO"/>
</dbReference>
<dbReference type="GO" id="GO:0045202">
    <property type="term" value="C:synapse"/>
    <property type="evidence" value="ECO:0000314"/>
    <property type="project" value="SynGO"/>
</dbReference>
<dbReference type="GO" id="GO:0003729">
    <property type="term" value="F:mRNA binding"/>
    <property type="evidence" value="ECO:0000314"/>
    <property type="project" value="MGI"/>
</dbReference>
<dbReference type="GO" id="GO:0003735">
    <property type="term" value="F:structural constituent of ribosome"/>
    <property type="evidence" value="ECO:0000314"/>
    <property type="project" value="UniProtKB"/>
</dbReference>
<dbReference type="GO" id="GO:0071346">
    <property type="term" value="P:cellular response to type II interferon"/>
    <property type="evidence" value="ECO:0000314"/>
    <property type="project" value="UniProtKB"/>
</dbReference>
<dbReference type="GO" id="GO:0002181">
    <property type="term" value="P:cytoplasmic translation"/>
    <property type="evidence" value="ECO:0000303"/>
    <property type="project" value="ComplexPortal"/>
</dbReference>
<dbReference type="GO" id="GO:0042592">
    <property type="term" value="P:homeostatic process"/>
    <property type="evidence" value="ECO:0000315"/>
    <property type="project" value="MGI"/>
</dbReference>
<dbReference type="GO" id="GO:0060425">
    <property type="term" value="P:lung morphogenesis"/>
    <property type="evidence" value="ECO:0000315"/>
    <property type="project" value="MGI"/>
</dbReference>
<dbReference type="GO" id="GO:0048246">
    <property type="term" value="P:macrophage chemotaxis"/>
    <property type="evidence" value="ECO:0000315"/>
    <property type="project" value="MGI"/>
</dbReference>
<dbReference type="GO" id="GO:1901194">
    <property type="term" value="P:negative regulation of formation of translation preinitiation complex"/>
    <property type="evidence" value="ECO:0007669"/>
    <property type="project" value="Ensembl"/>
</dbReference>
<dbReference type="GO" id="GO:0017148">
    <property type="term" value="P:negative regulation of translation"/>
    <property type="evidence" value="ECO:0000314"/>
    <property type="project" value="UniProtKB"/>
</dbReference>
<dbReference type="GO" id="GO:0032819">
    <property type="term" value="P:positive regulation of natural killer cell proliferation"/>
    <property type="evidence" value="ECO:0007669"/>
    <property type="project" value="Ensembl"/>
</dbReference>
<dbReference type="GO" id="GO:0032496">
    <property type="term" value="P:response to lipopolysaccharide"/>
    <property type="evidence" value="ECO:0000315"/>
    <property type="project" value="MGI"/>
</dbReference>
<dbReference type="GO" id="GO:0140242">
    <property type="term" value="P:translation at postsynapse"/>
    <property type="evidence" value="ECO:0000303"/>
    <property type="project" value="SynGO"/>
</dbReference>
<dbReference type="GO" id="GO:0140236">
    <property type="term" value="P:translation at presynapse"/>
    <property type="evidence" value="ECO:0000303"/>
    <property type="project" value="SynGO"/>
</dbReference>
<dbReference type="CDD" id="cd00392">
    <property type="entry name" value="Ribosomal_L13"/>
    <property type="match status" value="1"/>
</dbReference>
<dbReference type="FunFam" id="6.10.250.3250:FF:000001">
    <property type="entry name" value="60S ribosomal protein L13a"/>
    <property type="match status" value="1"/>
</dbReference>
<dbReference type="FunFam" id="3.90.1180.10:FF:000002">
    <property type="entry name" value="60S ribosomal protein L16"/>
    <property type="match status" value="1"/>
</dbReference>
<dbReference type="Gene3D" id="6.10.250.3250">
    <property type="match status" value="1"/>
</dbReference>
<dbReference type="Gene3D" id="3.90.1180.10">
    <property type="entry name" value="Ribosomal protein L13"/>
    <property type="match status" value="1"/>
</dbReference>
<dbReference type="HAMAP" id="MF_01366">
    <property type="entry name" value="Ribosomal_uL13"/>
    <property type="match status" value="1"/>
</dbReference>
<dbReference type="InterPro" id="IPR005822">
    <property type="entry name" value="Ribosomal_uL13"/>
</dbReference>
<dbReference type="InterPro" id="IPR023563">
    <property type="entry name" value="Ribosomal_uL13_CS"/>
</dbReference>
<dbReference type="InterPro" id="IPR005755">
    <property type="entry name" value="Ribosomal_uL13_euk/arc"/>
</dbReference>
<dbReference type="InterPro" id="IPR036899">
    <property type="entry name" value="Ribosomal_uL13_sf"/>
</dbReference>
<dbReference type="NCBIfam" id="TIGR01077">
    <property type="entry name" value="L13_A_E"/>
    <property type="match status" value="1"/>
</dbReference>
<dbReference type="PANTHER" id="PTHR11545:SF3">
    <property type="entry name" value="LARGE RIBOSOMAL SUBUNIT PROTEIN UL13"/>
    <property type="match status" value="1"/>
</dbReference>
<dbReference type="PANTHER" id="PTHR11545">
    <property type="entry name" value="RIBOSOMAL PROTEIN L13"/>
    <property type="match status" value="1"/>
</dbReference>
<dbReference type="Pfam" id="PF00572">
    <property type="entry name" value="Ribosomal_L13"/>
    <property type="match status" value="1"/>
</dbReference>
<dbReference type="SUPFAM" id="SSF52161">
    <property type="entry name" value="Ribosomal protein L13"/>
    <property type="match status" value="1"/>
</dbReference>
<dbReference type="PROSITE" id="PS00783">
    <property type="entry name" value="RIBOSOMAL_L13"/>
    <property type="match status" value="1"/>
</dbReference>
<organism>
    <name type="scientific">Mus musculus</name>
    <name type="common">Mouse</name>
    <dbReference type="NCBI Taxonomy" id="10090"/>
    <lineage>
        <taxon>Eukaryota</taxon>
        <taxon>Metazoa</taxon>
        <taxon>Chordata</taxon>
        <taxon>Craniata</taxon>
        <taxon>Vertebrata</taxon>
        <taxon>Euteleostomi</taxon>
        <taxon>Mammalia</taxon>
        <taxon>Eutheria</taxon>
        <taxon>Euarchontoglires</taxon>
        <taxon>Glires</taxon>
        <taxon>Rodentia</taxon>
        <taxon>Myomorpha</taxon>
        <taxon>Muroidea</taxon>
        <taxon>Muridae</taxon>
        <taxon>Murinae</taxon>
        <taxon>Mus</taxon>
        <taxon>Mus</taxon>
    </lineage>
</organism>